<comment type="similarity">
    <text evidence="1">Belongs to the bacterial ribosomal protein bL36 family.</text>
</comment>
<dbReference type="EMBL" id="CP000312">
    <property type="protein sequence ID" value="ABG85417.1"/>
    <property type="molecule type" value="Genomic_DNA"/>
</dbReference>
<dbReference type="RefSeq" id="WP_003373491.1">
    <property type="nucleotide sequence ID" value="NZ_CAXVKH010000004.1"/>
</dbReference>
<dbReference type="SMR" id="Q0SQG9"/>
<dbReference type="GeneID" id="93001034"/>
<dbReference type="KEGG" id="cpr:CPR_2374"/>
<dbReference type="Proteomes" id="UP000001824">
    <property type="component" value="Chromosome"/>
</dbReference>
<dbReference type="GO" id="GO:0005737">
    <property type="term" value="C:cytoplasm"/>
    <property type="evidence" value="ECO:0007669"/>
    <property type="project" value="UniProtKB-ARBA"/>
</dbReference>
<dbReference type="GO" id="GO:1990904">
    <property type="term" value="C:ribonucleoprotein complex"/>
    <property type="evidence" value="ECO:0007669"/>
    <property type="project" value="UniProtKB-KW"/>
</dbReference>
<dbReference type="GO" id="GO:0005840">
    <property type="term" value="C:ribosome"/>
    <property type="evidence" value="ECO:0007669"/>
    <property type="project" value="UniProtKB-KW"/>
</dbReference>
<dbReference type="GO" id="GO:0003735">
    <property type="term" value="F:structural constituent of ribosome"/>
    <property type="evidence" value="ECO:0007669"/>
    <property type="project" value="InterPro"/>
</dbReference>
<dbReference type="GO" id="GO:0006412">
    <property type="term" value="P:translation"/>
    <property type="evidence" value="ECO:0007669"/>
    <property type="project" value="UniProtKB-UniRule"/>
</dbReference>
<dbReference type="HAMAP" id="MF_00251">
    <property type="entry name" value="Ribosomal_bL36"/>
    <property type="match status" value="1"/>
</dbReference>
<dbReference type="InterPro" id="IPR000473">
    <property type="entry name" value="Ribosomal_bL36"/>
</dbReference>
<dbReference type="InterPro" id="IPR035977">
    <property type="entry name" value="Ribosomal_bL36_sp"/>
</dbReference>
<dbReference type="NCBIfam" id="TIGR01022">
    <property type="entry name" value="rpmJ_bact"/>
    <property type="match status" value="1"/>
</dbReference>
<dbReference type="PANTHER" id="PTHR42888">
    <property type="entry name" value="50S RIBOSOMAL PROTEIN L36, CHLOROPLASTIC"/>
    <property type="match status" value="1"/>
</dbReference>
<dbReference type="PANTHER" id="PTHR42888:SF1">
    <property type="entry name" value="LARGE RIBOSOMAL SUBUNIT PROTEIN BL36C"/>
    <property type="match status" value="1"/>
</dbReference>
<dbReference type="Pfam" id="PF00444">
    <property type="entry name" value="Ribosomal_L36"/>
    <property type="match status" value="1"/>
</dbReference>
<dbReference type="SUPFAM" id="SSF57840">
    <property type="entry name" value="Ribosomal protein L36"/>
    <property type="match status" value="1"/>
</dbReference>
<dbReference type="PROSITE" id="PS00828">
    <property type="entry name" value="RIBOSOMAL_L36"/>
    <property type="match status" value="1"/>
</dbReference>
<accession>Q0SQG9</accession>
<protein>
    <recommendedName>
        <fullName evidence="1">Large ribosomal subunit protein bL36</fullName>
    </recommendedName>
    <alternativeName>
        <fullName evidence="2">50S ribosomal protein L36</fullName>
    </alternativeName>
</protein>
<sequence>MKVRPSVKPICEKCKVIKRKGRVMVICENPKHKQKQG</sequence>
<evidence type="ECO:0000255" key="1">
    <source>
        <dbReference type="HAMAP-Rule" id="MF_00251"/>
    </source>
</evidence>
<evidence type="ECO:0000305" key="2"/>
<feature type="chain" id="PRO_0000302186" description="Large ribosomal subunit protein bL36">
    <location>
        <begin position="1"/>
        <end position="37"/>
    </location>
</feature>
<proteinExistence type="inferred from homology"/>
<organism>
    <name type="scientific">Clostridium perfringens (strain SM101 / Type A)</name>
    <dbReference type="NCBI Taxonomy" id="289380"/>
    <lineage>
        <taxon>Bacteria</taxon>
        <taxon>Bacillati</taxon>
        <taxon>Bacillota</taxon>
        <taxon>Clostridia</taxon>
        <taxon>Eubacteriales</taxon>
        <taxon>Clostridiaceae</taxon>
        <taxon>Clostridium</taxon>
    </lineage>
</organism>
<keyword id="KW-0687">Ribonucleoprotein</keyword>
<keyword id="KW-0689">Ribosomal protein</keyword>
<gene>
    <name evidence="1" type="primary">rpmJ</name>
    <name type="ordered locus">CPR_2374</name>
</gene>
<name>RL36_CLOPS</name>
<reference key="1">
    <citation type="journal article" date="2006" name="Genome Res.">
        <title>Skewed genomic variability in strains of the toxigenic bacterial pathogen, Clostridium perfringens.</title>
        <authorList>
            <person name="Myers G.S.A."/>
            <person name="Rasko D.A."/>
            <person name="Cheung J.K."/>
            <person name="Ravel J."/>
            <person name="Seshadri R."/>
            <person name="DeBoy R.T."/>
            <person name="Ren Q."/>
            <person name="Varga J."/>
            <person name="Awad M.M."/>
            <person name="Brinkac L.M."/>
            <person name="Daugherty S.C."/>
            <person name="Haft D.H."/>
            <person name="Dodson R.J."/>
            <person name="Madupu R."/>
            <person name="Nelson W.C."/>
            <person name="Rosovitz M.J."/>
            <person name="Sullivan S.A."/>
            <person name="Khouri H."/>
            <person name="Dimitrov G.I."/>
            <person name="Watkins K.L."/>
            <person name="Mulligan S."/>
            <person name="Benton J."/>
            <person name="Radune D."/>
            <person name="Fisher D.J."/>
            <person name="Atkins H.S."/>
            <person name="Hiscox T."/>
            <person name="Jost B.H."/>
            <person name="Billington S.J."/>
            <person name="Songer J.G."/>
            <person name="McClane B.A."/>
            <person name="Titball R.W."/>
            <person name="Rood J.I."/>
            <person name="Melville S.B."/>
            <person name="Paulsen I.T."/>
        </authorList>
    </citation>
    <scope>NUCLEOTIDE SEQUENCE [LARGE SCALE GENOMIC DNA]</scope>
    <source>
        <strain>SM101 / Type A</strain>
    </source>
</reference>